<name>PSSY_CAUVC</name>
<comment type="function">
    <text evidence="2">Is likely the initiating enzyme for holdfast polysaccharide synthesis. Catalyzes the transfer of the glucose-1-phosphate moiety from UDP-Glc onto the carrier lipid undecaprenyl phosphate (C55-P), forming a phosphoanhydride bond yielding to glucosyl-pyrophosphoryl-undecaprenol (Glc-PP-C55). Also possesses a weak galactose-1-P transferase activity.</text>
</comment>
<comment type="catalytic activity">
    <reaction evidence="2">
        <text>di-trans,octa-cis-undecaprenyl phosphate + UDP-alpha-D-glucose = alpha-D-glucosyl di-trans,octa-cis-undecaprenyl diphosphate + UMP</text>
        <dbReference type="Rhea" id="RHEA:28126"/>
        <dbReference type="ChEBI" id="CHEBI:57865"/>
        <dbReference type="ChEBI" id="CHEBI:58885"/>
        <dbReference type="ChEBI" id="CHEBI:60392"/>
        <dbReference type="ChEBI" id="CHEBI:61254"/>
        <dbReference type="EC" id="2.7.8.31"/>
    </reaction>
</comment>
<comment type="subcellular location">
    <subcellularLocation>
        <location evidence="2">Cell membrane</location>
        <topology evidence="2">Single-pass membrane protein</topology>
    </subcellularLocation>
</comment>
<comment type="miscellaneous">
    <text evidence="4">Complements colanic acid (CA) synthesis in the E.coli mutant lacking wcaJ. Can also partially complement the O-antigen defect in the S.typhimurium wbaP deletion strain (PubMed:22408159).</text>
</comment>
<comment type="similarity">
    <text evidence="3">Belongs to the bacterial sugar transferase family.</text>
</comment>
<sequence>MKEQGLPAVNIIACASPLLCTTTSSDCVSVWACELEQPLSDALGKLKDHPVDLGPSTQLLTLRPGGPLPRVAVDLRKRVLDVVAAALLTALFAPLLLLAALAIKLESPGPALFRQTRGGLGGAPFQILKLRTMHCREDGPDVAQAQRGDDRVTRVGRILRAASIDELPQLLNVLRGDMSLVGPRPHATAHDDYYSARIPEYAARYQARPGLTGLAQVRGLRGGTETVELMRQRIAADIDYIQTWSLWRDLKIVLRTVPSLLTTDNAY</sequence>
<dbReference type="EC" id="2.7.8.31"/>
<dbReference type="EMBL" id="AE005673">
    <property type="protein sequence ID" value="AAK22153.1"/>
    <property type="molecule type" value="Genomic_DNA"/>
</dbReference>
<dbReference type="PIR" id="E87269">
    <property type="entry name" value="E87269"/>
</dbReference>
<dbReference type="RefSeq" id="NP_418985.1">
    <property type="nucleotide sequence ID" value="NC_002696.2"/>
</dbReference>
<dbReference type="SMR" id="Q9ABR0"/>
<dbReference type="STRING" id="190650.CC_0166"/>
<dbReference type="DNASU" id="944218"/>
<dbReference type="EnsemblBacteria" id="AAK22153">
    <property type="protein sequence ID" value="AAK22153"/>
    <property type="gene ID" value="CC_0166"/>
</dbReference>
<dbReference type="KEGG" id="ccr:CC_0166"/>
<dbReference type="PATRIC" id="fig|190650.5.peg.163"/>
<dbReference type="eggNOG" id="COG2148">
    <property type="taxonomic scope" value="Bacteria"/>
</dbReference>
<dbReference type="HOGENOM" id="CLU_024920_1_2_5"/>
<dbReference type="BioCyc" id="CAULO:CC0166-MONOMER"/>
<dbReference type="Proteomes" id="UP000001816">
    <property type="component" value="Chromosome"/>
</dbReference>
<dbReference type="GO" id="GO:0005886">
    <property type="term" value="C:plasma membrane"/>
    <property type="evidence" value="ECO:0007669"/>
    <property type="project" value="UniProtKB-SubCell"/>
</dbReference>
<dbReference type="GO" id="GO:0016757">
    <property type="term" value="F:glycosyltransferase activity"/>
    <property type="evidence" value="ECO:0007669"/>
    <property type="project" value="UniProtKB-KW"/>
</dbReference>
<dbReference type="GO" id="GO:0089702">
    <property type="term" value="F:undecaprenyl-phosphate glucose phosphotransferase activity"/>
    <property type="evidence" value="ECO:0007669"/>
    <property type="project" value="UniProtKB-EC"/>
</dbReference>
<dbReference type="GO" id="GO:0009242">
    <property type="term" value="P:colanic acid biosynthetic process"/>
    <property type="evidence" value="ECO:0007669"/>
    <property type="project" value="TreeGrafter"/>
</dbReference>
<dbReference type="GO" id="GO:0000271">
    <property type="term" value="P:polysaccharide biosynthetic process"/>
    <property type="evidence" value="ECO:0007669"/>
    <property type="project" value="UniProtKB-KW"/>
</dbReference>
<dbReference type="InterPro" id="IPR003362">
    <property type="entry name" value="Bact_transf"/>
</dbReference>
<dbReference type="PANTHER" id="PTHR30576">
    <property type="entry name" value="COLANIC BIOSYNTHESIS UDP-GLUCOSE LIPID CARRIER TRANSFERASE"/>
    <property type="match status" value="1"/>
</dbReference>
<dbReference type="PANTHER" id="PTHR30576:SF21">
    <property type="entry name" value="UDP-GLUCOSE:UNDECAPRENYL-PHOSPHATE GLUCOSE-1-PHOSPHATE TRANSFERASE"/>
    <property type="match status" value="1"/>
</dbReference>
<dbReference type="Pfam" id="PF02397">
    <property type="entry name" value="Bac_transf"/>
    <property type="match status" value="1"/>
</dbReference>
<proteinExistence type="evidence at protein level"/>
<organism>
    <name type="scientific">Caulobacter vibrioides (strain ATCC 19089 / CIP 103742 / CB 15)</name>
    <name type="common">Caulobacter crescentus</name>
    <dbReference type="NCBI Taxonomy" id="190650"/>
    <lineage>
        <taxon>Bacteria</taxon>
        <taxon>Pseudomonadati</taxon>
        <taxon>Pseudomonadota</taxon>
        <taxon>Alphaproteobacteria</taxon>
        <taxon>Caulobacterales</taxon>
        <taxon>Caulobacteraceae</taxon>
        <taxon>Caulobacter</taxon>
    </lineage>
</organism>
<evidence type="ECO:0000255" key="1"/>
<evidence type="ECO:0000269" key="2">
    <source>
    </source>
</evidence>
<evidence type="ECO:0000305" key="3"/>
<evidence type="ECO:0000305" key="4">
    <source>
    </source>
</evidence>
<reference key="1">
    <citation type="journal article" date="2001" name="Proc. Natl. Acad. Sci. U.S.A.">
        <title>Complete genome sequence of Caulobacter crescentus.</title>
        <authorList>
            <person name="Nierman W.C."/>
            <person name="Feldblyum T.V."/>
            <person name="Laub M.T."/>
            <person name="Paulsen I.T."/>
            <person name="Nelson K.E."/>
            <person name="Eisen J.A."/>
            <person name="Heidelberg J.F."/>
            <person name="Alley M.R.K."/>
            <person name="Ohta N."/>
            <person name="Maddock J.R."/>
            <person name="Potocka I."/>
            <person name="Nelson W.C."/>
            <person name="Newton A."/>
            <person name="Stephens C."/>
            <person name="Phadke N.D."/>
            <person name="Ely B."/>
            <person name="DeBoy R.T."/>
            <person name="Dodson R.J."/>
            <person name="Durkin A.S."/>
            <person name="Gwinn M.L."/>
            <person name="Haft D.H."/>
            <person name="Kolonay J.F."/>
            <person name="Smit J."/>
            <person name="Craven M.B."/>
            <person name="Khouri H.M."/>
            <person name="Shetty J."/>
            <person name="Berry K.J."/>
            <person name="Utterback T.R."/>
            <person name="Tran K."/>
            <person name="Wolf A.M."/>
            <person name="Vamathevan J.J."/>
            <person name="Ermolaeva M.D."/>
            <person name="White O."/>
            <person name="Salzberg S.L."/>
            <person name="Venter J.C."/>
            <person name="Shapiro L."/>
            <person name="Fraser C.M."/>
        </authorList>
    </citation>
    <scope>NUCLEOTIDE SEQUENCE [LARGE SCALE GENOMIC DNA]</scope>
    <source>
        <strain>ATCC 19089 / CIP 103742 / CB 15</strain>
    </source>
</reference>
<reference key="2">
    <citation type="journal article" date="2012" name="J. Bacteriol.">
        <title>Functional characterization of UDP-glucose:undecaprenyl-phosphate glucose-1-phosphate transferases of Escherichia coli and Caulobacter crescentus.</title>
        <authorList>
            <person name="Patel K.B."/>
            <person name="Toh E."/>
            <person name="Fernandez X.B."/>
            <person name="Hanuszkiewicz A."/>
            <person name="Hardy G.G."/>
            <person name="Brun Y.V."/>
            <person name="Bernards M.A."/>
            <person name="Valvano M.A."/>
        </authorList>
    </citation>
    <scope>FUNCTION</scope>
    <scope>CATALYTIC ACTIVITY</scope>
    <scope>SUBSTRATE SPECIFICITY</scope>
    <scope>SUBCELLULAR LOCATION</scope>
    <source>
        <strain>ATCC 19089 / CIP 103742 / CB 15</strain>
    </source>
</reference>
<gene>
    <name type="primary">pssY</name>
    <name type="ordered locus">CC_0166</name>
</gene>
<feature type="chain" id="PRO_0000422393" description="UDP-glucose:undecaprenyl-phosphate glucose-1-phosphate transferase">
    <location>
        <begin position="1"/>
        <end position="267"/>
    </location>
</feature>
<feature type="transmembrane region" description="Helical" evidence="1">
    <location>
        <begin position="83"/>
        <end position="103"/>
    </location>
</feature>
<accession>Q9ABR0</accession>
<keyword id="KW-1003">Cell membrane</keyword>
<keyword id="KW-0270">Exopolysaccharide synthesis</keyword>
<keyword id="KW-0328">Glycosyltransferase</keyword>
<keyword id="KW-0472">Membrane</keyword>
<keyword id="KW-1185">Reference proteome</keyword>
<keyword id="KW-0808">Transferase</keyword>
<keyword id="KW-0812">Transmembrane</keyword>
<keyword id="KW-1133">Transmembrane helix</keyword>
<protein>
    <recommendedName>
        <fullName>UDP-glucose:undecaprenyl-phosphate glucose-1-phosphate transferase</fullName>
        <shortName>UDP-Glc:Und-P Glc-1-P transferase</shortName>
        <ecNumber>2.7.8.31</ecNumber>
    </recommendedName>
    <alternativeName>
        <fullName>Glucosyl-P-P-undecaprenol synthase</fullName>
    </alternativeName>
</protein>